<accession>Q320V5</accession>
<sequence length="109" mass="11720">MAQFEWVHAAWLALAIVLEIVANVFLKFSDGFRRKIFGLLSLAAVLAAFSALSQAVKGIDLSVAYALWGGFGIAATLAAGWILFGQRLNRKGWIGLVLLLAGMIMVKLA</sequence>
<name>MDTI_SHIBS</name>
<evidence type="ECO:0000255" key="1">
    <source>
        <dbReference type="HAMAP-Rule" id="MF_01597"/>
    </source>
</evidence>
<organism>
    <name type="scientific">Shigella boydii serotype 4 (strain Sb227)</name>
    <dbReference type="NCBI Taxonomy" id="300268"/>
    <lineage>
        <taxon>Bacteria</taxon>
        <taxon>Pseudomonadati</taxon>
        <taxon>Pseudomonadota</taxon>
        <taxon>Gammaproteobacteria</taxon>
        <taxon>Enterobacterales</taxon>
        <taxon>Enterobacteriaceae</taxon>
        <taxon>Shigella</taxon>
    </lineage>
</organism>
<feature type="chain" id="PRO_0000331151" description="Spermidine export protein MdtI">
    <location>
        <begin position="1"/>
        <end position="109"/>
    </location>
</feature>
<feature type="transmembrane region" description="Helical" evidence="1">
    <location>
        <begin position="6"/>
        <end position="26"/>
    </location>
</feature>
<feature type="transmembrane region" description="Helical" evidence="1">
    <location>
        <begin position="36"/>
        <end position="56"/>
    </location>
</feature>
<feature type="transmembrane region" description="Helical" evidence="1">
    <location>
        <begin position="64"/>
        <end position="84"/>
    </location>
</feature>
<feature type="transmembrane region" description="Helical" evidence="1">
    <location>
        <begin position="88"/>
        <end position="108"/>
    </location>
</feature>
<reference key="1">
    <citation type="journal article" date="2005" name="Nucleic Acids Res.">
        <title>Genome dynamics and diversity of Shigella species, the etiologic agents of bacillary dysentery.</title>
        <authorList>
            <person name="Yang F."/>
            <person name="Yang J."/>
            <person name="Zhang X."/>
            <person name="Chen L."/>
            <person name="Jiang Y."/>
            <person name="Yan Y."/>
            <person name="Tang X."/>
            <person name="Wang J."/>
            <person name="Xiong Z."/>
            <person name="Dong J."/>
            <person name="Xue Y."/>
            <person name="Zhu Y."/>
            <person name="Xu X."/>
            <person name="Sun L."/>
            <person name="Chen S."/>
            <person name="Nie H."/>
            <person name="Peng J."/>
            <person name="Xu J."/>
            <person name="Wang Y."/>
            <person name="Yuan Z."/>
            <person name="Wen Y."/>
            <person name="Yao Z."/>
            <person name="Shen Y."/>
            <person name="Qiang B."/>
            <person name="Hou Y."/>
            <person name="Yu J."/>
            <person name="Jin Q."/>
        </authorList>
    </citation>
    <scope>NUCLEOTIDE SEQUENCE [LARGE SCALE GENOMIC DNA]</scope>
    <source>
        <strain>Sb227</strain>
    </source>
</reference>
<gene>
    <name evidence="1" type="primary">mdtI</name>
    <name type="ordered locus">SBO_1537</name>
</gene>
<protein>
    <recommendedName>
        <fullName evidence="1">Spermidine export protein MdtI</fullName>
    </recommendedName>
</protein>
<comment type="function">
    <text evidence="1">Catalyzes the excretion of spermidine.</text>
</comment>
<comment type="subunit">
    <text evidence="1">Forms a complex with MdtJ.</text>
</comment>
<comment type="subcellular location">
    <subcellularLocation>
        <location evidence="1">Cell inner membrane</location>
        <topology evidence="1">Multi-pass membrane protein</topology>
    </subcellularLocation>
</comment>
<comment type="similarity">
    <text evidence="1">Belongs to the drug/metabolite transporter (DMT) superfamily. Small multidrug resistance (SMR) (TC 2.A.7.1) family. MdtI subfamily.</text>
</comment>
<keyword id="KW-0997">Cell inner membrane</keyword>
<keyword id="KW-1003">Cell membrane</keyword>
<keyword id="KW-0472">Membrane</keyword>
<keyword id="KW-0812">Transmembrane</keyword>
<keyword id="KW-1133">Transmembrane helix</keyword>
<keyword id="KW-0813">Transport</keyword>
<proteinExistence type="inferred from homology"/>
<dbReference type="EMBL" id="CP000036">
    <property type="protein sequence ID" value="ABB66153.1"/>
    <property type="molecule type" value="Genomic_DNA"/>
</dbReference>
<dbReference type="RefSeq" id="WP_000046661.1">
    <property type="nucleotide sequence ID" value="NC_007613.1"/>
</dbReference>
<dbReference type="SMR" id="Q320V5"/>
<dbReference type="GeneID" id="93775747"/>
<dbReference type="KEGG" id="sbo:SBO_1537"/>
<dbReference type="HOGENOM" id="CLU_133067_0_4_6"/>
<dbReference type="Proteomes" id="UP000007067">
    <property type="component" value="Chromosome"/>
</dbReference>
<dbReference type="GO" id="GO:0005886">
    <property type="term" value="C:plasma membrane"/>
    <property type="evidence" value="ECO:0007669"/>
    <property type="project" value="UniProtKB-SubCell"/>
</dbReference>
<dbReference type="GO" id="GO:0015199">
    <property type="term" value="F:amino-acid betaine transmembrane transporter activity"/>
    <property type="evidence" value="ECO:0007669"/>
    <property type="project" value="TreeGrafter"/>
</dbReference>
<dbReference type="GO" id="GO:0015297">
    <property type="term" value="F:antiporter activity"/>
    <property type="evidence" value="ECO:0007669"/>
    <property type="project" value="TreeGrafter"/>
</dbReference>
<dbReference type="GO" id="GO:0015220">
    <property type="term" value="F:choline transmembrane transporter activity"/>
    <property type="evidence" value="ECO:0007669"/>
    <property type="project" value="TreeGrafter"/>
</dbReference>
<dbReference type="GO" id="GO:0015606">
    <property type="term" value="F:spermidine transmembrane transporter activity"/>
    <property type="evidence" value="ECO:0007669"/>
    <property type="project" value="UniProtKB-UniRule"/>
</dbReference>
<dbReference type="GO" id="GO:0031460">
    <property type="term" value="P:glycine betaine transport"/>
    <property type="evidence" value="ECO:0007669"/>
    <property type="project" value="TreeGrafter"/>
</dbReference>
<dbReference type="FunFam" id="1.10.3730.20:FF:000001">
    <property type="entry name" value="Quaternary ammonium compound resistance transporter SugE"/>
    <property type="match status" value="1"/>
</dbReference>
<dbReference type="Gene3D" id="1.10.3730.20">
    <property type="match status" value="1"/>
</dbReference>
<dbReference type="HAMAP" id="MF_01597">
    <property type="entry name" value="MdtI"/>
    <property type="match status" value="1"/>
</dbReference>
<dbReference type="InterPro" id="IPR000390">
    <property type="entry name" value="Small_drug/metabolite_transptr"/>
</dbReference>
<dbReference type="InterPro" id="IPR045324">
    <property type="entry name" value="Small_multidrug_res"/>
</dbReference>
<dbReference type="InterPro" id="IPR023737">
    <property type="entry name" value="Spermidine_export_MdtI"/>
</dbReference>
<dbReference type="NCBIfam" id="NF007934">
    <property type="entry name" value="PRK10650.1"/>
    <property type="match status" value="1"/>
</dbReference>
<dbReference type="PANTHER" id="PTHR30561">
    <property type="entry name" value="SMR FAMILY PROTON-DEPENDENT DRUG EFFLUX TRANSPORTER SUGE"/>
    <property type="match status" value="1"/>
</dbReference>
<dbReference type="PANTHER" id="PTHR30561:SF6">
    <property type="entry name" value="SPERMIDINE EXPORT PROTEIN MDTI"/>
    <property type="match status" value="1"/>
</dbReference>
<dbReference type="Pfam" id="PF00893">
    <property type="entry name" value="Multi_Drug_Res"/>
    <property type="match status" value="1"/>
</dbReference>
<dbReference type="SUPFAM" id="SSF103481">
    <property type="entry name" value="Multidrug resistance efflux transporter EmrE"/>
    <property type="match status" value="1"/>
</dbReference>